<name>RSD_SHIFL</name>
<keyword id="KW-0963">Cytoplasm</keyword>
<keyword id="KW-1185">Reference proteome</keyword>
<keyword id="KW-0804">Transcription</keyword>
<keyword id="KW-0805">Transcription regulation</keyword>
<reference key="1">
    <citation type="journal article" date="2002" name="Nucleic Acids Res.">
        <title>Genome sequence of Shigella flexneri 2a: insights into pathogenicity through comparison with genomes of Escherichia coli K12 and O157.</title>
        <authorList>
            <person name="Jin Q."/>
            <person name="Yuan Z."/>
            <person name="Xu J."/>
            <person name="Wang Y."/>
            <person name="Shen Y."/>
            <person name="Lu W."/>
            <person name="Wang J."/>
            <person name="Liu H."/>
            <person name="Yang J."/>
            <person name="Yang F."/>
            <person name="Zhang X."/>
            <person name="Zhang J."/>
            <person name="Yang G."/>
            <person name="Wu H."/>
            <person name="Qu D."/>
            <person name="Dong J."/>
            <person name="Sun L."/>
            <person name="Xue Y."/>
            <person name="Zhao A."/>
            <person name="Gao Y."/>
            <person name="Zhu J."/>
            <person name="Kan B."/>
            <person name="Ding K."/>
            <person name="Chen S."/>
            <person name="Cheng H."/>
            <person name="Yao Z."/>
            <person name="He B."/>
            <person name="Chen R."/>
            <person name="Ma D."/>
            <person name="Qiang B."/>
            <person name="Wen Y."/>
            <person name="Hou Y."/>
            <person name="Yu J."/>
        </authorList>
    </citation>
    <scope>NUCLEOTIDE SEQUENCE [LARGE SCALE GENOMIC DNA]</scope>
    <source>
        <strain>301 / Serotype 2a</strain>
    </source>
</reference>
<reference key="2">
    <citation type="journal article" date="2003" name="Infect. Immun.">
        <title>Complete genome sequence and comparative genomics of Shigella flexneri serotype 2a strain 2457T.</title>
        <authorList>
            <person name="Wei J."/>
            <person name="Goldberg M.B."/>
            <person name="Burland V."/>
            <person name="Venkatesan M.M."/>
            <person name="Deng W."/>
            <person name="Fournier G."/>
            <person name="Mayhew G.F."/>
            <person name="Plunkett G. III"/>
            <person name="Rose D.J."/>
            <person name="Darling A."/>
            <person name="Mau B."/>
            <person name="Perna N.T."/>
            <person name="Payne S.M."/>
            <person name="Runyen-Janecky L.J."/>
            <person name="Zhou S."/>
            <person name="Schwartz D.C."/>
            <person name="Blattner F.R."/>
        </authorList>
    </citation>
    <scope>NUCLEOTIDE SEQUENCE [LARGE SCALE GENOMIC DNA]</scope>
    <source>
        <strain>ATCC 700930 / 2457T / Serotype 2a</strain>
    </source>
</reference>
<feature type="chain" id="PRO_0000097478" description="Regulator of sigma D">
    <location>
        <begin position="1"/>
        <end position="158"/>
    </location>
</feature>
<accession>P0AFX6</accession>
<accession>P31690</accession>
<dbReference type="EMBL" id="AE005674">
    <property type="protein sequence ID" value="AAN45496.1"/>
    <property type="molecule type" value="Genomic_DNA"/>
</dbReference>
<dbReference type="EMBL" id="AE014073">
    <property type="protein sequence ID" value="AAP18705.1"/>
    <property type="molecule type" value="Genomic_DNA"/>
</dbReference>
<dbReference type="RefSeq" id="WP_000934302.1">
    <property type="nucleotide sequence ID" value="NZ_WPGW01000040.1"/>
</dbReference>
<dbReference type="SMR" id="P0AFX6"/>
<dbReference type="STRING" id="198214.SF4067"/>
<dbReference type="PaxDb" id="198214-SF4067"/>
<dbReference type="GeneID" id="75205513"/>
<dbReference type="KEGG" id="sfl:SF4067"/>
<dbReference type="KEGG" id="sfx:S3668"/>
<dbReference type="PATRIC" id="fig|198214.7.peg.4791"/>
<dbReference type="HOGENOM" id="CLU_142729_0_0_6"/>
<dbReference type="Proteomes" id="UP000001006">
    <property type="component" value="Chromosome"/>
</dbReference>
<dbReference type="Proteomes" id="UP000002673">
    <property type="component" value="Chromosome"/>
</dbReference>
<dbReference type="GO" id="GO:0005737">
    <property type="term" value="C:cytoplasm"/>
    <property type="evidence" value="ECO:0007669"/>
    <property type="project" value="UniProtKB-SubCell"/>
</dbReference>
<dbReference type="GO" id="GO:0006355">
    <property type="term" value="P:regulation of DNA-templated transcription"/>
    <property type="evidence" value="ECO:0007669"/>
    <property type="project" value="InterPro"/>
</dbReference>
<dbReference type="FunFam" id="1.20.120.1370:FF:000001">
    <property type="entry name" value="Regulator of sigma D"/>
    <property type="match status" value="1"/>
</dbReference>
<dbReference type="Gene3D" id="1.20.120.1370">
    <property type="entry name" value="Regulator of RNA polymerase sigma(70) subunit, domain 4"/>
    <property type="match status" value="1"/>
</dbReference>
<dbReference type="HAMAP" id="MF_01181">
    <property type="entry name" value="Rsd"/>
    <property type="match status" value="1"/>
</dbReference>
<dbReference type="InterPro" id="IPR038309">
    <property type="entry name" value="Rsd/AlgQ_sf"/>
</dbReference>
<dbReference type="InterPro" id="IPR023785">
    <property type="entry name" value="Sigma70_reg_Rsd"/>
</dbReference>
<dbReference type="InterPro" id="IPR007448">
    <property type="entry name" value="Sigma70_reg_Rsd_AlgQ"/>
</dbReference>
<dbReference type="NCBIfam" id="NF008723">
    <property type="entry name" value="PRK11718.1"/>
    <property type="match status" value="1"/>
</dbReference>
<dbReference type="Pfam" id="PF04353">
    <property type="entry name" value="Rsd_AlgQ"/>
    <property type="match status" value="1"/>
</dbReference>
<dbReference type="PIRSF" id="PIRSF016548">
    <property type="entry name" value="Rsd_AlgQ"/>
    <property type="match status" value="1"/>
</dbReference>
<evidence type="ECO:0000255" key="1">
    <source>
        <dbReference type="HAMAP-Rule" id="MF_01181"/>
    </source>
</evidence>
<sequence length="158" mass="18243">MLNQLDNLTERVRGSNKLVDRWLHVRKHLLVAYYNLVGIKPGKESYMRLNEKALDDFCQSLVDYLSAGHFSIYERILHKLEGNGQLARAAKIWPQLEANTQQIMDYYDSSLETAIDHDNYLEFQQVLSDIGEALEARFVLEDKLILLVLDAARVKHPA</sequence>
<comment type="function">
    <text evidence="1">Binds RpoD and negatively regulates RpoD-mediated transcription activation by preventing the interaction between the primary sigma factor RpoD with the catalytic core of the RNA polymerase and with promoter DNA. May be involved in replacement of the RNA polymerase sigma subunit from RpoD to RpoS during the transition from exponential growth to the stationary phase.</text>
</comment>
<comment type="subunit">
    <text evidence="1">Interacts with RpoD.</text>
</comment>
<comment type="subcellular location">
    <subcellularLocation>
        <location evidence="1">Cytoplasm</location>
    </subcellularLocation>
</comment>
<comment type="similarity">
    <text evidence="1">Belongs to the Rsd/AlgQ family.</text>
</comment>
<organism>
    <name type="scientific">Shigella flexneri</name>
    <dbReference type="NCBI Taxonomy" id="623"/>
    <lineage>
        <taxon>Bacteria</taxon>
        <taxon>Pseudomonadati</taxon>
        <taxon>Pseudomonadota</taxon>
        <taxon>Gammaproteobacteria</taxon>
        <taxon>Enterobacterales</taxon>
        <taxon>Enterobacteriaceae</taxon>
        <taxon>Shigella</taxon>
    </lineage>
</organism>
<proteinExistence type="inferred from homology"/>
<gene>
    <name evidence="1" type="primary">rsd</name>
    <name type="ordered locus">SF4067</name>
    <name type="ordered locus">S3668</name>
</gene>
<protein>
    <recommendedName>
        <fullName evidence="1">Regulator of sigma D</fullName>
    </recommendedName>
</protein>